<comment type="function">
    <text evidence="2">GTP hydrolase that promotes the GTP-dependent binding of aminoacyl-tRNA to the A-site of ribosomes during protein biosynthesis.</text>
</comment>
<comment type="catalytic activity">
    <reaction evidence="2">
        <text>GTP + H2O = GDP + phosphate + H(+)</text>
        <dbReference type="Rhea" id="RHEA:19669"/>
        <dbReference type="ChEBI" id="CHEBI:15377"/>
        <dbReference type="ChEBI" id="CHEBI:15378"/>
        <dbReference type="ChEBI" id="CHEBI:37565"/>
        <dbReference type="ChEBI" id="CHEBI:43474"/>
        <dbReference type="ChEBI" id="CHEBI:58189"/>
        <dbReference type="EC" id="3.6.5.3"/>
    </reaction>
    <physiologicalReaction direction="left-to-right" evidence="2">
        <dbReference type="Rhea" id="RHEA:19670"/>
    </physiologicalReaction>
</comment>
<comment type="subunit">
    <text evidence="2">Monomer.</text>
</comment>
<comment type="subcellular location">
    <subcellularLocation>
        <location evidence="2">Cytoplasm</location>
    </subcellularLocation>
</comment>
<comment type="similarity">
    <text evidence="2">Belongs to the TRAFAC class translation factor GTPase superfamily. Classic translation factor GTPase family. EF-Tu/EF-1A subfamily.</text>
</comment>
<keyword id="KW-0963">Cytoplasm</keyword>
<keyword id="KW-0251">Elongation factor</keyword>
<keyword id="KW-0342">GTP-binding</keyword>
<keyword id="KW-0378">Hydrolase</keyword>
<keyword id="KW-0460">Magnesium</keyword>
<keyword id="KW-0479">Metal-binding</keyword>
<keyword id="KW-0547">Nucleotide-binding</keyword>
<keyword id="KW-0648">Protein biosynthesis</keyword>
<organism>
    <name type="scientific">Streptococcus equi subsp. zooepidemicus (strain MGCS10565)</name>
    <dbReference type="NCBI Taxonomy" id="552526"/>
    <lineage>
        <taxon>Bacteria</taxon>
        <taxon>Bacillati</taxon>
        <taxon>Bacillota</taxon>
        <taxon>Bacilli</taxon>
        <taxon>Lactobacillales</taxon>
        <taxon>Streptococcaceae</taxon>
        <taxon>Streptococcus</taxon>
    </lineage>
</organism>
<accession>B4U3U1</accession>
<gene>
    <name evidence="2" type="primary">tuf</name>
    <name type="ordered locus">Sez_1322</name>
</gene>
<protein>
    <recommendedName>
        <fullName evidence="2">Elongation factor Tu</fullName>
        <shortName evidence="2">EF-Tu</shortName>
        <ecNumber evidence="2">3.6.5.3</ecNumber>
    </recommendedName>
</protein>
<proteinExistence type="inferred from homology"/>
<feature type="chain" id="PRO_1000095089" description="Elongation factor Tu">
    <location>
        <begin position="1"/>
        <end position="398"/>
    </location>
</feature>
<feature type="domain" description="tr-type G">
    <location>
        <begin position="10"/>
        <end position="207"/>
    </location>
</feature>
<feature type="region of interest" description="G1" evidence="1">
    <location>
        <begin position="19"/>
        <end position="26"/>
    </location>
</feature>
<feature type="region of interest" description="G2" evidence="1">
    <location>
        <begin position="63"/>
        <end position="67"/>
    </location>
</feature>
<feature type="region of interest" description="G3" evidence="1">
    <location>
        <begin position="84"/>
        <end position="87"/>
    </location>
</feature>
<feature type="region of interest" description="G4" evidence="1">
    <location>
        <begin position="139"/>
        <end position="142"/>
    </location>
</feature>
<feature type="region of interest" description="G5" evidence="1">
    <location>
        <begin position="177"/>
        <end position="179"/>
    </location>
</feature>
<feature type="binding site" evidence="2">
    <location>
        <begin position="19"/>
        <end position="26"/>
    </location>
    <ligand>
        <name>GTP</name>
        <dbReference type="ChEBI" id="CHEBI:37565"/>
    </ligand>
</feature>
<feature type="binding site" evidence="2">
    <location>
        <position position="26"/>
    </location>
    <ligand>
        <name>Mg(2+)</name>
        <dbReference type="ChEBI" id="CHEBI:18420"/>
    </ligand>
</feature>
<feature type="binding site" evidence="2">
    <location>
        <begin position="84"/>
        <end position="88"/>
    </location>
    <ligand>
        <name>GTP</name>
        <dbReference type="ChEBI" id="CHEBI:37565"/>
    </ligand>
</feature>
<feature type="binding site" evidence="2">
    <location>
        <begin position="139"/>
        <end position="142"/>
    </location>
    <ligand>
        <name>GTP</name>
        <dbReference type="ChEBI" id="CHEBI:37565"/>
    </ligand>
</feature>
<dbReference type="EC" id="3.6.5.3" evidence="2"/>
<dbReference type="EMBL" id="CP001129">
    <property type="protein sequence ID" value="ACG62658.1"/>
    <property type="molecule type" value="Genomic_DNA"/>
</dbReference>
<dbReference type="RefSeq" id="WP_012515923.1">
    <property type="nucleotide sequence ID" value="NC_011134.1"/>
</dbReference>
<dbReference type="SMR" id="B4U3U1"/>
<dbReference type="GeneID" id="83705201"/>
<dbReference type="KEGG" id="sez:Sez_1322"/>
<dbReference type="HOGENOM" id="CLU_007265_0_0_9"/>
<dbReference type="Proteomes" id="UP000001873">
    <property type="component" value="Chromosome"/>
</dbReference>
<dbReference type="GO" id="GO:0005829">
    <property type="term" value="C:cytosol"/>
    <property type="evidence" value="ECO:0007669"/>
    <property type="project" value="TreeGrafter"/>
</dbReference>
<dbReference type="GO" id="GO:0005525">
    <property type="term" value="F:GTP binding"/>
    <property type="evidence" value="ECO:0007669"/>
    <property type="project" value="UniProtKB-UniRule"/>
</dbReference>
<dbReference type="GO" id="GO:0003924">
    <property type="term" value="F:GTPase activity"/>
    <property type="evidence" value="ECO:0007669"/>
    <property type="project" value="InterPro"/>
</dbReference>
<dbReference type="GO" id="GO:0003746">
    <property type="term" value="F:translation elongation factor activity"/>
    <property type="evidence" value="ECO:0007669"/>
    <property type="project" value="UniProtKB-UniRule"/>
</dbReference>
<dbReference type="CDD" id="cd01884">
    <property type="entry name" value="EF_Tu"/>
    <property type="match status" value="1"/>
</dbReference>
<dbReference type="CDD" id="cd03697">
    <property type="entry name" value="EFTU_II"/>
    <property type="match status" value="1"/>
</dbReference>
<dbReference type="CDD" id="cd03707">
    <property type="entry name" value="EFTU_III"/>
    <property type="match status" value="1"/>
</dbReference>
<dbReference type="FunFam" id="2.40.30.10:FF:000001">
    <property type="entry name" value="Elongation factor Tu"/>
    <property type="match status" value="1"/>
</dbReference>
<dbReference type="FunFam" id="3.40.50.300:FF:000003">
    <property type="entry name" value="Elongation factor Tu"/>
    <property type="match status" value="1"/>
</dbReference>
<dbReference type="Gene3D" id="3.40.50.300">
    <property type="entry name" value="P-loop containing nucleotide triphosphate hydrolases"/>
    <property type="match status" value="1"/>
</dbReference>
<dbReference type="Gene3D" id="2.40.30.10">
    <property type="entry name" value="Translation factors"/>
    <property type="match status" value="2"/>
</dbReference>
<dbReference type="HAMAP" id="MF_00118_B">
    <property type="entry name" value="EF_Tu_B"/>
    <property type="match status" value="1"/>
</dbReference>
<dbReference type="InterPro" id="IPR041709">
    <property type="entry name" value="EF-Tu_GTP-bd"/>
</dbReference>
<dbReference type="InterPro" id="IPR050055">
    <property type="entry name" value="EF-Tu_GTPase"/>
</dbReference>
<dbReference type="InterPro" id="IPR004161">
    <property type="entry name" value="EFTu-like_2"/>
</dbReference>
<dbReference type="InterPro" id="IPR033720">
    <property type="entry name" value="EFTU_2"/>
</dbReference>
<dbReference type="InterPro" id="IPR031157">
    <property type="entry name" value="G_TR_CS"/>
</dbReference>
<dbReference type="InterPro" id="IPR027417">
    <property type="entry name" value="P-loop_NTPase"/>
</dbReference>
<dbReference type="InterPro" id="IPR005225">
    <property type="entry name" value="Small_GTP-bd"/>
</dbReference>
<dbReference type="InterPro" id="IPR000795">
    <property type="entry name" value="T_Tr_GTP-bd_dom"/>
</dbReference>
<dbReference type="InterPro" id="IPR009000">
    <property type="entry name" value="Transl_B-barrel_sf"/>
</dbReference>
<dbReference type="InterPro" id="IPR009001">
    <property type="entry name" value="Transl_elong_EF1A/Init_IF2_C"/>
</dbReference>
<dbReference type="InterPro" id="IPR004541">
    <property type="entry name" value="Transl_elong_EFTu/EF1A_bac/org"/>
</dbReference>
<dbReference type="InterPro" id="IPR004160">
    <property type="entry name" value="Transl_elong_EFTu/EF1A_C"/>
</dbReference>
<dbReference type="NCBIfam" id="TIGR00485">
    <property type="entry name" value="EF-Tu"/>
    <property type="match status" value="1"/>
</dbReference>
<dbReference type="NCBIfam" id="NF000766">
    <property type="entry name" value="PRK00049.1"/>
    <property type="match status" value="1"/>
</dbReference>
<dbReference type="NCBIfam" id="NF009372">
    <property type="entry name" value="PRK12735.1"/>
    <property type="match status" value="1"/>
</dbReference>
<dbReference type="NCBIfam" id="NF009373">
    <property type="entry name" value="PRK12736.1"/>
    <property type="match status" value="1"/>
</dbReference>
<dbReference type="NCBIfam" id="TIGR00231">
    <property type="entry name" value="small_GTP"/>
    <property type="match status" value="1"/>
</dbReference>
<dbReference type="PANTHER" id="PTHR43721:SF22">
    <property type="entry name" value="ELONGATION FACTOR TU, MITOCHONDRIAL"/>
    <property type="match status" value="1"/>
</dbReference>
<dbReference type="PANTHER" id="PTHR43721">
    <property type="entry name" value="ELONGATION FACTOR TU-RELATED"/>
    <property type="match status" value="1"/>
</dbReference>
<dbReference type="Pfam" id="PF00009">
    <property type="entry name" value="GTP_EFTU"/>
    <property type="match status" value="1"/>
</dbReference>
<dbReference type="Pfam" id="PF03144">
    <property type="entry name" value="GTP_EFTU_D2"/>
    <property type="match status" value="1"/>
</dbReference>
<dbReference type="Pfam" id="PF03143">
    <property type="entry name" value="GTP_EFTU_D3"/>
    <property type="match status" value="1"/>
</dbReference>
<dbReference type="PRINTS" id="PR00315">
    <property type="entry name" value="ELONGATNFCT"/>
</dbReference>
<dbReference type="SUPFAM" id="SSF50465">
    <property type="entry name" value="EF-Tu/eEF-1alpha/eIF2-gamma C-terminal domain"/>
    <property type="match status" value="1"/>
</dbReference>
<dbReference type="SUPFAM" id="SSF52540">
    <property type="entry name" value="P-loop containing nucleoside triphosphate hydrolases"/>
    <property type="match status" value="1"/>
</dbReference>
<dbReference type="SUPFAM" id="SSF50447">
    <property type="entry name" value="Translation proteins"/>
    <property type="match status" value="1"/>
</dbReference>
<dbReference type="PROSITE" id="PS00301">
    <property type="entry name" value="G_TR_1"/>
    <property type="match status" value="1"/>
</dbReference>
<dbReference type="PROSITE" id="PS51722">
    <property type="entry name" value="G_TR_2"/>
    <property type="match status" value="1"/>
</dbReference>
<name>EFTU_STREM</name>
<evidence type="ECO:0000250" key="1"/>
<evidence type="ECO:0000255" key="2">
    <source>
        <dbReference type="HAMAP-Rule" id="MF_00118"/>
    </source>
</evidence>
<sequence length="398" mass="43869">MAKEKYDRSKPHVNIGTIGHVDHGKTTLTAAITTVLARRLPSSVNQPKDYASIDAAPEERERGITINTAHVEYETATRHYAHIDAPGHADYVKNMITGAAQMDGAILVVASTDGPMPQTREHILLSRQVGVKHLIVFMNKVDLVDDEELLELVEMEIRDLLSEYDFPGDDLPVIQGSALKALEGDSKYEDIIMELMDTVDSYIPEPERDTDKPLLLPVEDVFSITGRGTVASGRIDRGTVRVNDEIEIVGIRDEIKKAVVTGVEMFRKQLDEGLAGDNVGVLLRGVQRDEIERGQVIAKPGSINPHTKFKGEVYILTKEEGGRHTPFFNNYRPQFYFRTTDVTGSIELPAGTEMVMPGDNVTIDVELIHPIAVEQGTTFSIREGGRTVGSGIVSEIEA</sequence>
<reference key="1">
    <citation type="journal article" date="2008" name="PLoS ONE">
        <title>Genome sequence of a lancefield group C Streptococcus zooepidemicus strain causing epidemic nephritis: new information about an old disease.</title>
        <authorList>
            <person name="Beres S.B."/>
            <person name="Sesso R."/>
            <person name="Pinto S.W.L."/>
            <person name="Hoe N.P."/>
            <person name="Porcella S.F."/>
            <person name="Deleo F.R."/>
            <person name="Musser J.M."/>
        </authorList>
    </citation>
    <scope>NUCLEOTIDE SEQUENCE [LARGE SCALE GENOMIC DNA]</scope>
    <source>
        <strain>MGCS10565</strain>
    </source>
</reference>